<protein>
    <recommendedName>
        <fullName>Annexin A6</fullName>
    </recommendedName>
    <alternativeName>
        <fullName>Annexin VI</fullName>
    </alternativeName>
    <alternativeName>
        <fullName>Annexin-6</fullName>
    </alternativeName>
    <alternativeName>
        <fullName>Calcium-binding protein 65/67</fullName>
        <shortName>CBP 65/67</shortName>
    </alternativeName>
</protein>
<proteinExistence type="evidence at protein level"/>
<reference key="1">
    <citation type="journal article" date="1995" name="Eur. J. Biochem.">
        <title>cDNA cloning and tissue-specific regulation of expression of rat calcium-binding protein 65/67. Identification as a homologue of annexin VI.</title>
        <authorList>
            <person name="Fan H."/>
            <person name="Josic D."/>
            <person name="Lim Y.P."/>
            <person name="Reutter W."/>
        </authorList>
    </citation>
    <scope>NUCLEOTIDE SEQUENCE [MRNA]</scope>
    <source>
        <strain>Sprague-Dawley</strain>
        <tissue>Liver</tissue>
    </source>
</reference>
<reference key="2">
    <citation type="submission" date="2007-07" db="UniProtKB">
        <authorList>
            <person name="Lubec G."/>
            <person name="Kang S.U."/>
        </authorList>
    </citation>
    <scope>PROTEIN SEQUENCE OF 41-50; 103-113; 359-370; 378-393; 419-427; 457-465; 500-509 AND 588-598</scope>
    <scope>IDENTIFICATION BY MASS SPECTROMETRY</scope>
    <source>
        <strain>Sprague-Dawley</strain>
        <tissue>Brain</tissue>
    </source>
</reference>
<reference key="3">
    <citation type="journal article" date="1992" name="J. Biol. Chem.">
        <title>CAP-50, a newly identified annexin, localizes in nuclei of cultured fibroblast 3Y1 cells.</title>
        <authorList>
            <person name="Mizutani A."/>
            <person name="Usuda N."/>
            <person name="Tokumitsu H."/>
            <person name="Minami H."/>
            <person name="Yasui K."/>
            <person name="Kobayashi R."/>
            <person name="Hidaka H."/>
        </authorList>
    </citation>
    <scope>SUBCELLULAR LOCATION</scope>
</reference>
<reference key="4">
    <citation type="journal article" date="2012" name="Nat. Commun.">
        <title>Quantitative maps of protein phosphorylation sites across 14 different rat organs and tissues.</title>
        <authorList>
            <person name="Lundby A."/>
            <person name="Secher A."/>
            <person name="Lage K."/>
            <person name="Nordsborg N.B."/>
            <person name="Dmytriyev A."/>
            <person name="Lundby C."/>
            <person name="Olsen J.V."/>
        </authorList>
    </citation>
    <scope>PHOSPHORYLATION [LARGE SCALE ANALYSIS] AT SER-422</scope>
    <scope>IDENTIFICATION BY MASS SPECTROMETRY [LARGE SCALE ANALYSIS]</scope>
</reference>
<feature type="initiator methionine" description="Removed" evidence="2">
    <location>
        <position position="1"/>
    </location>
</feature>
<feature type="chain" id="PRO_0000067496" description="Annexin A6">
    <location>
        <begin position="2"/>
        <end position="673"/>
    </location>
</feature>
<feature type="repeat" description="Annexin 1" evidence="4">
    <location>
        <begin position="20"/>
        <end position="91"/>
    </location>
</feature>
<feature type="repeat" description="Annexin 2" evidence="4">
    <location>
        <begin position="92"/>
        <end position="163"/>
    </location>
</feature>
<feature type="repeat" description="Annexin 3" evidence="4">
    <location>
        <begin position="175"/>
        <end position="247"/>
    </location>
</feature>
<feature type="repeat" description="Annexin 4" evidence="4">
    <location>
        <begin position="251"/>
        <end position="322"/>
    </location>
</feature>
<feature type="repeat" description="Annexin 5" evidence="4">
    <location>
        <begin position="363"/>
        <end position="434"/>
    </location>
</feature>
<feature type="repeat" description="Annexin 6" evidence="4">
    <location>
        <begin position="435"/>
        <end position="506"/>
    </location>
</feature>
<feature type="repeat" description="Annexin 7" evidence="4">
    <location>
        <begin position="521"/>
        <end position="595"/>
    </location>
</feature>
<feature type="repeat" description="Annexin 8" evidence="4">
    <location>
        <begin position="599"/>
        <end position="670"/>
    </location>
</feature>
<feature type="modified residue" description="N-acetylalanine" evidence="2">
    <location>
        <position position="2"/>
    </location>
</feature>
<feature type="modified residue" description="Phosphoserine" evidence="2">
    <location>
        <position position="13"/>
    </location>
</feature>
<feature type="modified residue" description="Phosphotyrosine" evidence="2">
    <location>
        <position position="30"/>
    </location>
</feature>
<feature type="modified residue" description="N6-acetyllysine" evidence="2">
    <location>
        <position position="63"/>
    </location>
</feature>
<feature type="modified residue" description="N6-acetyllysine" evidence="2">
    <location>
        <position position="68"/>
    </location>
</feature>
<feature type="modified residue" description="N6-acetyllysine" evidence="2">
    <location>
        <position position="75"/>
    </location>
</feature>
<feature type="modified residue" description="N6-acetyllysine" evidence="2">
    <location>
        <position position="81"/>
    </location>
</feature>
<feature type="modified residue" description="Phosphotyrosine" evidence="3">
    <location>
        <position position="201"/>
    </location>
</feature>
<feature type="modified residue" description="N6-acetyllysine" evidence="2">
    <location>
        <position position="306"/>
    </location>
</feature>
<feature type="modified residue" description="N6-acetyllysine" evidence="2">
    <location>
        <position position="370"/>
    </location>
</feature>
<feature type="modified residue" description="N6-acetyllysine" evidence="2">
    <location>
        <position position="418"/>
    </location>
</feature>
<feature type="modified residue" description="Phosphoserine" evidence="6">
    <location>
        <position position="422"/>
    </location>
</feature>
<feature type="modified residue" description="N6-acetyllysine" evidence="2">
    <location>
        <position position="483"/>
    </location>
</feature>
<feature type="modified residue" description="Phosphoserine" evidence="2">
    <location>
        <position position="537"/>
    </location>
</feature>
<feature type="modified residue" description="N6-acetyllysine" evidence="2">
    <location>
        <position position="620"/>
    </location>
</feature>
<organism>
    <name type="scientific">Rattus norvegicus</name>
    <name type="common">Rat</name>
    <dbReference type="NCBI Taxonomy" id="10116"/>
    <lineage>
        <taxon>Eukaryota</taxon>
        <taxon>Metazoa</taxon>
        <taxon>Chordata</taxon>
        <taxon>Craniata</taxon>
        <taxon>Vertebrata</taxon>
        <taxon>Euteleostomi</taxon>
        <taxon>Mammalia</taxon>
        <taxon>Eutheria</taxon>
        <taxon>Euarchontoglires</taxon>
        <taxon>Glires</taxon>
        <taxon>Rodentia</taxon>
        <taxon>Myomorpha</taxon>
        <taxon>Muroidea</taxon>
        <taxon>Muridae</taxon>
        <taxon>Murinae</taxon>
        <taxon>Rattus</taxon>
    </lineage>
</organism>
<sequence>MAKIAQGAMYRGSVHDFADFDANQDAEALYTAMKGFGSDKESILELITSRSNKQRQEICQSYKSLYGKDLIADLKYELTGKFERLIVNLMRPLAYCDAKEIKDAISGIGTDEKCLIEILASRTNEQIHQLVAAYKDAYERDLESDIIGDTSGHFQKMLVVLLQGTRENDDVVSEDLVQQDVQDLYEAGELKWGTDEAQFIYILGNRSKQHLRLVFDEYLKTTGKPIEASIRGELSGDFEKLMLAVVKCIRSTPEYFAERLFKAMKGLGTRDNTLIRIMVSRSELDMLDIREIFRTKYEKSLYSMIKNDTSGEYKKALLKLCGGDDDAAGQFFPEAAQVAYQMWELSAVSRVELKGTVRAANDFNPDADAKGLRKAMKGIGTDEATIIDIITQRSNVQRQQIRQTFKSHFGRDLMADLKSEISGDLARLILGLMMPPAHYDAKQLKKAMEGAGTDEKALIEILATRTNAEIRAINEAYKEDYHKSLEDALSSDTSGHFKRILISLATGNREEGGENRDQAQEDAQVAAEILEIADTPSGDKTSLETRFMTVLCTRSYPHLRRVFQEFIKKTNYDIEHVIKKEMSGDVKDAFVAIVQSVKNKPLFFADKLYKSMKGAGTDEKTLTRVMVSRSEIDLLNIRREFIEKYDKSPHQAIEGDTSGDFMKALLALCGGED</sequence>
<gene>
    <name type="primary">Anxa6</name>
    <name type="synonym">Anx6</name>
</gene>
<comment type="function">
    <text>May associate with CD21. May regulate the release of Ca(2+) from intracellular stores.</text>
</comment>
<comment type="subcellular location">
    <subcellularLocation>
        <location evidence="1">Cytoplasm</location>
    </subcellularLocation>
    <subcellularLocation>
        <location evidence="1">Melanosome</location>
    </subcellularLocation>
</comment>
<comment type="domain">
    <text>A pair of annexin repeats may form one binding site for calcium and phospholipid.</text>
</comment>
<comment type="miscellaneous">
    <text>Seems to bind one calcium ion with high affinity.</text>
</comment>
<comment type="similarity">
    <text evidence="4 5">Belongs to the annexin family.</text>
</comment>
<evidence type="ECO:0000250" key="1"/>
<evidence type="ECO:0000250" key="2">
    <source>
        <dbReference type="UniProtKB" id="P08133"/>
    </source>
</evidence>
<evidence type="ECO:0000250" key="3">
    <source>
        <dbReference type="UniProtKB" id="P14824"/>
    </source>
</evidence>
<evidence type="ECO:0000255" key="4">
    <source>
        <dbReference type="PROSITE-ProRule" id="PRU01245"/>
    </source>
</evidence>
<evidence type="ECO:0000305" key="5"/>
<evidence type="ECO:0007744" key="6">
    <source>
    </source>
</evidence>
<keyword id="KW-0007">Acetylation</keyword>
<keyword id="KW-0041">Annexin</keyword>
<keyword id="KW-0106">Calcium</keyword>
<keyword id="KW-0111">Calcium/phospholipid-binding</keyword>
<keyword id="KW-0963">Cytoplasm</keyword>
<keyword id="KW-0903">Direct protein sequencing</keyword>
<keyword id="KW-0597">Phosphoprotein</keyword>
<keyword id="KW-1185">Reference proteome</keyword>
<keyword id="KW-0677">Repeat</keyword>
<name>ANXA6_RAT</name>
<accession>P48037</accession>
<dbReference type="EMBL" id="X86086">
    <property type="protein sequence ID" value="CAA60040.1"/>
    <property type="molecule type" value="mRNA"/>
</dbReference>
<dbReference type="PIR" id="S65683">
    <property type="entry name" value="S52844"/>
</dbReference>
<dbReference type="SMR" id="P48037"/>
<dbReference type="CORUM" id="P48037"/>
<dbReference type="FunCoup" id="P48037">
    <property type="interactions" value="858"/>
</dbReference>
<dbReference type="IntAct" id="P48037">
    <property type="interactions" value="1"/>
</dbReference>
<dbReference type="STRING" id="10116.ENSRNOP00000014464"/>
<dbReference type="GlyGen" id="P48037">
    <property type="glycosylation" value="1 site, 1 O-linked glycan (1 site)"/>
</dbReference>
<dbReference type="iPTMnet" id="P48037"/>
<dbReference type="PhosphoSitePlus" id="P48037"/>
<dbReference type="jPOST" id="P48037"/>
<dbReference type="PaxDb" id="10116-ENSRNOP00000014464"/>
<dbReference type="UCSC" id="RGD:621172">
    <property type="organism name" value="rat"/>
</dbReference>
<dbReference type="AGR" id="RGD:621172"/>
<dbReference type="RGD" id="621172">
    <property type="gene designation" value="Anxa6"/>
</dbReference>
<dbReference type="eggNOG" id="KOG0819">
    <property type="taxonomic scope" value="Eukaryota"/>
</dbReference>
<dbReference type="InParanoid" id="P48037"/>
<dbReference type="PhylomeDB" id="P48037"/>
<dbReference type="PRO" id="PR:P48037"/>
<dbReference type="Proteomes" id="UP000002494">
    <property type="component" value="Unplaced"/>
</dbReference>
<dbReference type="GO" id="GO:0016324">
    <property type="term" value="C:apical plasma membrane"/>
    <property type="evidence" value="ECO:0000314"/>
    <property type="project" value="RGD"/>
</dbReference>
<dbReference type="GO" id="GO:0005737">
    <property type="term" value="C:cytoplasm"/>
    <property type="evidence" value="ECO:0000318"/>
    <property type="project" value="GO_Central"/>
</dbReference>
<dbReference type="GO" id="GO:0014704">
    <property type="term" value="C:intercalated disc"/>
    <property type="evidence" value="ECO:0000314"/>
    <property type="project" value="RGD"/>
</dbReference>
<dbReference type="GO" id="GO:0031902">
    <property type="term" value="C:late endosome membrane"/>
    <property type="evidence" value="ECO:0000266"/>
    <property type="project" value="RGD"/>
</dbReference>
<dbReference type="GO" id="GO:0005765">
    <property type="term" value="C:lysosomal membrane"/>
    <property type="evidence" value="ECO:0000266"/>
    <property type="project" value="RGD"/>
</dbReference>
<dbReference type="GO" id="GO:0042470">
    <property type="term" value="C:melanosome"/>
    <property type="evidence" value="ECO:0007669"/>
    <property type="project" value="UniProtKB-SubCell"/>
</dbReference>
<dbReference type="GO" id="GO:0016020">
    <property type="term" value="C:membrane"/>
    <property type="evidence" value="ECO:0000314"/>
    <property type="project" value="MGI"/>
</dbReference>
<dbReference type="GO" id="GO:0005739">
    <property type="term" value="C:mitochondrion"/>
    <property type="evidence" value="ECO:0007669"/>
    <property type="project" value="GOC"/>
</dbReference>
<dbReference type="GO" id="GO:0005634">
    <property type="term" value="C:nucleus"/>
    <property type="evidence" value="ECO:0000318"/>
    <property type="project" value="GO_Central"/>
</dbReference>
<dbReference type="GO" id="GO:0048471">
    <property type="term" value="C:perinuclear region of cytoplasm"/>
    <property type="evidence" value="ECO:0000266"/>
    <property type="project" value="RGD"/>
</dbReference>
<dbReference type="GO" id="GO:0005886">
    <property type="term" value="C:plasma membrane"/>
    <property type="evidence" value="ECO:0000318"/>
    <property type="project" value="GO_Central"/>
</dbReference>
<dbReference type="GO" id="GO:0032991">
    <property type="term" value="C:protein-containing complex"/>
    <property type="evidence" value="ECO:0000314"/>
    <property type="project" value="RGD"/>
</dbReference>
<dbReference type="GO" id="GO:0042383">
    <property type="term" value="C:sarcolemma"/>
    <property type="evidence" value="ECO:0000314"/>
    <property type="project" value="RGD"/>
</dbReference>
<dbReference type="GO" id="GO:0012506">
    <property type="term" value="C:vesicle membrane"/>
    <property type="evidence" value="ECO:0000318"/>
    <property type="project" value="GO_Central"/>
</dbReference>
<dbReference type="GO" id="GO:0005509">
    <property type="term" value="F:calcium ion binding"/>
    <property type="evidence" value="ECO:0007669"/>
    <property type="project" value="InterPro"/>
</dbReference>
<dbReference type="GO" id="GO:0005544">
    <property type="term" value="F:calcium-dependent phospholipid binding"/>
    <property type="evidence" value="ECO:0000314"/>
    <property type="project" value="RGD"/>
</dbReference>
<dbReference type="GO" id="GO:0048306">
    <property type="term" value="F:calcium-dependent protein binding"/>
    <property type="evidence" value="ECO:0000266"/>
    <property type="project" value="RGD"/>
</dbReference>
<dbReference type="GO" id="GO:0015485">
    <property type="term" value="F:cholesterol binding"/>
    <property type="evidence" value="ECO:0000266"/>
    <property type="project" value="RGD"/>
</dbReference>
<dbReference type="GO" id="GO:0005525">
    <property type="term" value="F:GTP binding"/>
    <property type="evidence" value="ECO:0000266"/>
    <property type="project" value="RGD"/>
</dbReference>
<dbReference type="GO" id="GO:0042802">
    <property type="term" value="F:identical protein binding"/>
    <property type="evidence" value="ECO:0000266"/>
    <property type="project" value="RGD"/>
</dbReference>
<dbReference type="GO" id="GO:0015276">
    <property type="term" value="F:ligand-gated monoatomic ion channel activity"/>
    <property type="evidence" value="ECO:0000266"/>
    <property type="project" value="RGD"/>
</dbReference>
<dbReference type="GO" id="GO:0008289">
    <property type="term" value="F:lipid binding"/>
    <property type="evidence" value="ECO:0000266"/>
    <property type="project" value="RGD"/>
</dbReference>
<dbReference type="GO" id="GO:0001786">
    <property type="term" value="F:phosphatidylserine binding"/>
    <property type="evidence" value="ECO:0000318"/>
    <property type="project" value="GO_Central"/>
</dbReference>
<dbReference type="GO" id="GO:0044877">
    <property type="term" value="F:protein-containing complex binding"/>
    <property type="evidence" value="ECO:0000353"/>
    <property type="project" value="RGD"/>
</dbReference>
<dbReference type="GO" id="GO:0097190">
    <property type="term" value="P:apoptotic signaling pathway"/>
    <property type="evidence" value="ECO:0000266"/>
    <property type="project" value="RGD"/>
</dbReference>
<dbReference type="GO" id="GO:0006816">
    <property type="term" value="P:calcium ion transport"/>
    <property type="evidence" value="ECO:0000266"/>
    <property type="project" value="RGD"/>
</dbReference>
<dbReference type="GO" id="GO:0051560">
    <property type="term" value="P:mitochondrial calcium ion homeostasis"/>
    <property type="evidence" value="ECO:0000266"/>
    <property type="project" value="RGD"/>
</dbReference>
<dbReference type="GO" id="GO:0034220">
    <property type="term" value="P:monoatomic ion transmembrane transport"/>
    <property type="evidence" value="ECO:0000266"/>
    <property type="project" value="RGD"/>
</dbReference>
<dbReference type="GO" id="GO:0051283">
    <property type="term" value="P:negative regulation of sequestering of calcium ion"/>
    <property type="evidence" value="ECO:0000318"/>
    <property type="project" value="GO_Central"/>
</dbReference>
<dbReference type="GO" id="GO:0006937">
    <property type="term" value="P:regulation of muscle contraction"/>
    <property type="evidence" value="ECO:0000266"/>
    <property type="project" value="RGD"/>
</dbReference>
<dbReference type="GO" id="GO:0046903">
    <property type="term" value="P:secretion"/>
    <property type="evidence" value="ECO:0000304"/>
    <property type="project" value="RGD"/>
</dbReference>
<dbReference type="FunFam" id="1.10.220.10:FF:000001">
    <property type="entry name" value="Annexin"/>
    <property type="match status" value="2"/>
</dbReference>
<dbReference type="FunFam" id="1.10.220.10:FF:000002">
    <property type="entry name" value="Annexin"/>
    <property type="match status" value="1"/>
</dbReference>
<dbReference type="FunFam" id="1.10.220.10:FF:000003">
    <property type="entry name" value="Annexin"/>
    <property type="match status" value="2"/>
</dbReference>
<dbReference type="FunFam" id="1.10.220.10:FF:000004">
    <property type="entry name" value="Annexin"/>
    <property type="match status" value="1"/>
</dbReference>
<dbReference type="FunFam" id="1.10.220.10:FF:000005">
    <property type="entry name" value="Annexin"/>
    <property type="match status" value="1"/>
</dbReference>
<dbReference type="FunFam" id="1.10.220.10:FF:000013">
    <property type="entry name" value="Annexin"/>
    <property type="match status" value="1"/>
</dbReference>
<dbReference type="Gene3D" id="1.10.220.10">
    <property type="entry name" value="Annexin"/>
    <property type="match status" value="8"/>
</dbReference>
<dbReference type="InterPro" id="IPR001464">
    <property type="entry name" value="Annexin"/>
</dbReference>
<dbReference type="InterPro" id="IPR018502">
    <property type="entry name" value="Annexin_repeat"/>
</dbReference>
<dbReference type="InterPro" id="IPR018252">
    <property type="entry name" value="Annexin_repeat_CS"/>
</dbReference>
<dbReference type="InterPro" id="IPR037104">
    <property type="entry name" value="Annexin_sf"/>
</dbReference>
<dbReference type="InterPro" id="IPR002393">
    <property type="entry name" value="ANX6"/>
</dbReference>
<dbReference type="PANTHER" id="PTHR10502">
    <property type="entry name" value="ANNEXIN"/>
    <property type="match status" value="1"/>
</dbReference>
<dbReference type="PANTHER" id="PTHR10502:SF19">
    <property type="entry name" value="ANNEXIN A6"/>
    <property type="match status" value="1"/>
</dbReference>
<dbReference type="Pfam" id="PF00191">
    <property type="entry name" value="Annexin"/>
    <property type="match status" value="8"/>
</dbReference>
<dbReference type="PRINTS" id="PR00196">
    <property type="entry name" value="ANNEXIN"/>
</dbReference>
<dbReference type="PRINTS" id="PR00202">
    <property type="entry name" value="ANNEXINVI"/>
</dbReference>
<dbReference type="SMART" id="SM00335">
    <property type="entry name" value="ANX"/>
    <property type="match status" value="8"/>
</dbReference>
<dbReference type="SUPFAM" id="SSF47874">
    <property type="entry name" value="Annexin"/>
    <property type="match status" value="2"/>
</dbReference>
<dbReference type="PROSITE" id="PS00223">
    <property type="entry name" value="ANNEXIN_1"/>
    <property type="match status" value="7"/>
</dbReference>
<dbReference type="PROSITE" id="PS51897">
    <property type="entry name" value="ANNEXIN_2"/>
    <property type="match status" value="8"/>
</dbReference>